<proteinExistence type="inferred from homology"/>
<accession>A3MNP7</accession>
<reference key="1">
    <citation type="journal article" date="2010" name="Genome Biol. Evol.">
        <title>Continuing evolution of Burkholderia mallei through genome reduction and large-scale rearrangements.</title>
        <authorList>
            <person name="Losada L."/>
            <person name="Ronning C.M."/>
            <person name="DeShazer D."/>
            <person name="Woods D."/>
            <person name="Fedorova N."/>
            <person name="Kim H.S."/>
            <person name="Shabalina S.A."/>
            <person name="Pearson T.R."/>
            <person name="Brinkac L."/>
            <person name="Tan P."/>
            <person name="Nandi T."/>
            <person name="Crabtree J."/>
            <person name="Badger J."/>
            <person name="Beckstrom-Sternberg S."/>
            <person name="Saqib M."/>
            <person name="Schutzer S.E."/>
            <person name="Keim P."/>
            <person name="Nierman W.C."/>
        </authorList>
    </citation>
    <scope>NUCLEOTIDE SEQUENCE [LARGE SCALE GENOMIC DNA]</scope>
    <source>
        <strain>NCTC 10247</strain>
    </source>
</reference>
<evidence type="ECO:0000255" key="1">
    <source>
        <dbReference type="HAMAP-Rule" id="MF_00188"/>
    </source>
</evidence>
<sequence>MFNWVKTAMLMAAITALFIVIGGMIGGSRGMTIALLIALGMNFFSYWFSDKMVLRMYNAQEVDEATAPQFYRMVRELATRANLPMPRVYLIDENQPNAFATGRNPEHAAVAATTGILRVLSEREMRGVMAHELAHVKHRDILISTISATMAGAISALANFAMFFGGRDENGRPANPIAGIAVALLAPIAGALIQMAISRAREFEADRGGAQISGDPQALASALDKIHRYASGIPFQTAEEHPATAQMMIMNPLSGGGLQNLFSTHPATEERIARLMDMARTGRFD</sequence>
<keyword id="KW-0997">Cell inner membrane</keyword>
<keyword id="KW-1003">Cell membrane</keyword>
<keyword id="KW-0378">Hydrolase</keyword>
<keyword id="KW-0472">Membrane</keyword>
<keyword id="KW-0479">Metal-binding</keyword>
<keyword id="KW-0482">Metalloprotease</keyword>
<keyword id="KW-0645">Protease</keyword>
<keyword id="KW-0812">Transmembrane</keyword>
<keyword id="KW-1133">Transmembrane helix</keyword>
<keyword id="KW-0862">Zinc</keyword>
<dbReference type="EC" id="3.4.24.-" evidence="1"/>
<dbReference type="EMBL" id="CP000548">
    <property type="protein sequence ID" value="ABO05180.1"/>
    <property type="molecule type" value="Genomic_DNA"/>
</dbReference>
<dbReference type="RefSeq" id="WP_004189409.1">
    <property type="nucleotide sequence ID" value="NZ_CP007802.1"/>
</dbReference>
<dbReference type="GeneID" id="93058627"/>
<dbReference type="KEGG" id="bmaz:BM44_929"/>
<dbReference type="KEGG" id="bmn:BMA10247_2356"/>
<dbReference type="PATRIC" id="fig|320389.8.peg.1032"/>
<dbReference type="GO" id="GO:0005886">
    <property type="term" value="C:plasma membrane"/>
    <property type="evidence" value="ECO:0007669"/>
    <property type="project" value="UniProtKB-SubCell"/>
</dbReference>
<dbReference type="GO" id="GO:0004222">
    <property type="term" value="F:metalloendopeptidase activity"/>
    <property type="evidence" value="ECO:0007669"/>
    <property type="project" value="UniProtKB-UniRule"/>
</dbReference>
<dbReference type="GO" id="GO:0008270">
    <property type="term" value="F:zinc ion binding"/>
    <property type="evidence" value="ECO:0007669"/>
    <property type="project" value="UniProtKB-UniRule"/>
</dbReference>
<dbReference type="GO" id="GO:0006508">
    <property type="term" value="P:proteolysis"/>
    <property type="evidence" value="ECO:0007669"/>
    <property type="project" value="UniProtKB-KW"/>
</dbReference>
<dbReference type="CDD" id="cd07336">
    <property type="entry name" value="M48B_HtpX_like"/>
    <property type="match status" value="1"/>
</dbReference>
<dbReference type="Gene3D" id="3.30.2010.10">
    <property type="entry name" value="Metalloproteases ('zincins'), catalytic domain"/>
    <property type="match status" value="1"/>
</dbReference>
<dbReference type="HAMAP" id="MF_00188">
    <property type="entry name" value="Pept_M48_protease_HtpX"/>
    <property type="match status" value="1"/>
</dbReference>
<dbReference type="InterPro" id="IPR050083">
    <property type="entry name" value="HtpX_protease"/>
</dbReference>
<dbReference type="InterPro" id="IPR022919">
    <property type="entry name" value="Pept_M48_protease_HtpX"/>
</dbReference>
<dbReference type="InterPro" id="IPR001915">
    <property type="entry name" value="Peptidase_M48"/>
</dbReference>
<dbReference type="NCBIfam" id="NF002363">
    <property type="entry name" value="PRK01345.1"/>
    <property type="match status" value="1"/>
</dbReference>
<dbReference type="NCBIfam" id="NF002826">
    <property type="entry name" value="PRK03001.1"/>
    <property type="match status" value="1"/>
</dbReference>
<dbReference type="PANTHER" id="PTHR43221">
    <property type="entry name" value="PROTEASE HTPX"/>
    <property type="match status" value="1"/>
</dbReference>
<dbReference type="PANTHER" id="PTHR43221:SF1">
    <property type="entry name" value="PROTEASE HTPX"/>
    <property type="match status" value="1"/>
</dbReference>
<dbReference type="Pfam" id="PF01435">
    <property type="entry name" value="Peptidase_M48"/>
    <property type="match status" value="1"/>
</dbReference>
<gene>
    <name evidence="1" type="primary">htpX</name>
    <name type="ordered locus">BMA10247_2356</name>
</gene>
<name>HTPX_BURM7</name>
<feature type="chain" id="PRO_1000077451" description="Protease HtpX homolog">
    <location>
        <begin position="1"/>
        <end position="285"/>
    </location>
</feature>
<feature type="transmembrane region" description="Helical" evidence="1">
    <location>
        <begin position="7"/>
        <end position="27"/>
    </location>
</feature>
<feature type="transmembrane region" description="Helical" evidence="1">
    <location>
        <begin position="30"/>
        <end position="50"/>
    </location>
</feature>
<feature type="transmembrane region" description="Helical" evidence="1">
    <location>
        <begin position="146"/>
        <end position="166"/>
    </location>
</feature>
<feature type="transmembrane region" description="Helical" evidence="1">
    <location>
        <begin position="177"/>
        <end position="197"/>
    </location>
</feature>
<feature type="active site" evidence="1">
    <location>
        <position position="132"/>
    </location>
</feature>
<feature type="binding site" evidence="1">
    <location>
        <position position="131"/>
    </location>
    <ligand>
        <name>Zn(2+)</name>
        <dbReference type="ChEBI" id="CHEBI:29105"/>
        <note>catalytic</note>
    </ligand>
</feature>
<feature type="binding site" evidence="1">
    <location>
        <position position="135"/>
    </location>
    <ligand>
        <name>Zn(2+)</name>
        <dbReference type="ChEBI" id="CHEBI:29105"/>
        <note>catalytic</note>
    </ligand>
</feature>
<feature type="binding site" evidence="1">
    <location>
        <position position="202"/>
    </location>
    <ligand>
        <name>Zn(2+)</name>
        <dbReference type="ChEBI" id="CHEBI:29105"/>
        <note>catalytic</note>
    </ligand>
</feature>
<comment type="cofactor">
    <cofactor evidence="1">
        <name>Zn(2+)</name>
        <dbReference type="ChEBI" id="CHEBI:29105"/>
    </cofactor>
    <text evidence="1">Binds 1 zinc ion per subunit.</text>
</comment>
<comment type="subcellular location">
    <subcellularLocation>
        <location evidence="1">Cell inner membrane</location>
        <topology evidence="1">Multi-pass membrane protein</topology>
    </subcellularLocation>
</comment>
<comment type="similarity">
    <text evidence="1">Belongs to the peptidase M48B family.</text>
</comment>
<protein>
    <recommendedName>
        <fullName evidence="1">Protease HtpX homolog</fullName>
        <ecNumber evidence="1">3.4.24.-</ecNumber>
    </recommendedName>
</protein>
<organism>
    <name type="scientific">Burkholderia mallei (strain NCTC 10247)</name>
    <dbReference type="NCBI Taxonomy" id="320389"/>
    <lineage>
        <taxon>Bacteria</taxon>
        <taxon>Pseudomonadati</taxon>
        <taxon>Pseudomonadota</taxon>
        <taxon>Betaproteobacteria</taxon>
        <taxon>Burkholderiales</taxon>
        <taxon>Burkholderiaceae</taxon>
        <taxon>Burkholderia</taxon>
        <taxon>pseudomallei group</taxon>
    </lineage>
</organism>